<keyword id="KW-0028">Amino-acid biosynthesis</keyword>
<keyword id="KW-0198">Cysteine biosynthesis</keyword>
<keyword id="KW-0378">Hydrolase</keyword>
<keyword id="KW-0479">Metal-binding</keyword>
<keyword id="KW-0482">Metalloprotease</keyword>
<keyword id="KW-0645">Protease</keyword>
<keyword id="KW-1185">Reference proteome</keyword>
<keyword id="KW-0862">Zinc</keyword>
<feature type="chain" id="PRO_0000428134" description="CysO-cysteine peptidase">
    <location>
        <begin position="1"/>
        <end position="146"/>
    </location>
</feature>
<feature type="domain" description="MPN" evidence="2">
    <location>
        <begin position="11"/>
        <end position="134"/>
    </location>
</feature>
<feature type="short sequence motif" description="JAMM motif" evidence="2">
    <location>
        <begin position="88"/>
        <end position="101"/>
    </location>
</feature>
<feature type="binding site" evidence="2">
    <location>
        <position position="88"/>
    </location>
    <ligand>
        <name>Zn(2+)</name>
        <dbReference type="ChEBI" id="CHEBI:29105"/>
        <note>catalytic</note>
    </ligand>
</feature>
<feature type="binding site" evidence="2">
    <location>
        <position position="90"/>
    </location>
    <ligand>
        <name>Zn(2+)</name>
        <dbReference type="ChEBI" id="CHEBI:29105"/>
        <note>catalytic</note>
    </ligand>
</feature>
<feature type="binding site" evidence="2">
    <location>
        <position position="101"/>
    </location>
    <ligand>
        <name>Zn(2+)</name>
        <dbReference type="ChEBI" id="CHEBI:29105"/>
        <note>catalytic</note>
    </ligand>
</feature>
<protein>
    <recommendedName>
        <fullName>CysO-cysteine peptidase</fullName>
        <ecNumber evidence="1">3.13.1.6</ecNumber>
    </recommendedName>
    <alternativeName>
        <fullName>Metallocarboxypeptidase Mec</fullName>
    </alternativeName>
</protein>
<name>MEC_MYCTO</name>
<comment type="function">
    <text evidence="1">Protease that hydrolyzes the covalent CysO-cysteine adduct synthesized by CysM to release L-cysteine and regenerate CysO.</text>
</comment>
<comment type="catalytic activity">
    <reaction evidence="1">
        <text>[CysO sulfur-carrier protein]-Gly-NH-CH2-C(O)-S-L-Cys + H2O = [CysO sulfur-carrier protein]-C-terminal Gly-Gly + L-cysteine + H(+)</text>
        <dbReference type="Rhea" id="RHEA:48732"/>
        <dbReference type="Rhea" id="RHEA-COMP:12207"/>
        <dbReference type="Rhea" id="RHEA-COMP:12212"/>
        <dbReference type="ChEBI" id="CHEBI:15377"/>
        <dbReference type="ChEBI" id="CHEBI:15378"/>
        <dbReference type="ChEBI" id="CHEBI:35235"/>
        <dbReference type="ChEBI" id="CHEBI:90778"/>
        <dbReference type="ChEBI" id="CHEBI:90783"/>
        <dbReference type="EC" id="3.13.1.6"/>
    </reaction>
</comment>
<comment type="cofactor">
    <cofactor evidence="1">
        <name>Zn(2+)</name>
        <dbReference type="ChEBI" id="CHEBI:29105"/>
    </cofactor>
</comment>
<comment type="pathway">
    <text>Amino-acid biosynthesis; L-cysteine biosynthesis.</text>
</comment>
<comment type="similarity">
    <text evidence="3">Belongs to the peptidase M67A family.</text>
</comment>
<dbReference type="EC" id="3.13.1.6" evidence="1"/>
<dbReference type="EMBL" id="AE000516">
    <property type="protein sequence ID" value="AAK45640.1"/>
    <property type="molecule type" value="Genomic_DNA"/>
</dbReference>
<dbReference type="PIR" id="B70771">
    <property type="entry name" value="B70771"/>
</dbReference>
<dbReference type="RefSeq" id="WP_003898830.1">
    <property type="nucleotide sequence ID" value="NZ_KK341227.1"/>
</dbReference>
<dbReference type="SMR" id="P9WHS0"/>
<dbReference type="MEROPS" id="M67.009"/>
<dbReference type="GeneID" id="45425312"/>
<dbReference type="KEGG" id="mtc:MT1376"/>
<dbReference type="PATRIC" id="fig|83331.31.peg.1483"/>
<dbReference type="HOGENOM" id="CLU_116765_1_0_11"/>
<dbReference type="UniPathway" id="UPA00136"/>
<dbReference type="Proteomes" id="UP000001020">
    <property type="component" value="Chromosome"/>
</dbReference>
<dbReference type="GO" id="GO:0008235">
    <property type="term" value="F:metalloexopeptidase activity"/>
    <property type="evidence" value="ECO:0007669"/>
    <property type="project" value="TreeGrafter"/>
</dbReference>
<dbReference type="GO" id="GO:0008270">
    <property type="term" value="F:zinc ion binding"/>
    <property type="evidence" value="ECO:0007669"/>
    <property type="project" value="TreeGrafter"/>
</dbReference>
<dbReference type="GO" id="GO:0019344">
    <property type="term" value="P:cysteine biosynthetic process"/>
    <property type="evidence" value="ECO:0007669"/>
    <property type="project" value="UniProtKB-UniPathway"/>
</dbReference>
<dbReference type="GO" id="GO:0006508">
    <property type="term" value="P:proteolysis"/>
    <property type="evidence" value="ECO:0007669"/>
    <property type="project" value="UniProtKB-KW"/>
</dbReference>
<dbReference type="CDD" id="cd08070">
    <property type="entry name" value="MPN_like"/>
    <property type="match status" value="1"/>
</dbReference>
<dbReference type="FunFam" id="3.40.140.10:FF:000048">
    <property type="entry name" value="CysO-cysteine peptidase"/>
    <property type="match status" value="1"/>
</dbReference>
<dbReference type="Gene3D" id="3.40.140.10">
    <property type="entry name" value="Cytidine Deaminase, domain 2"/>
    <property type="match status" value="1"/>
</dbReference>
<dbReference type="InterPro" id="IPR028090">
    <property type="entry name" value="JAB_dom_prok"/>
</dbReference>
<dbReference type="InterPro" id="IPR000555">
    <property type="entry name" value="JAMM/MPN+_dom"/>
</dbReference>
<dbReference type="InterPro" id="IPR037518">
    <property type="entry name" value="MPN"/>
</dbReference>
<dbReference type="InterPro" id="IPR051929">
    <property type="entry name" value="VirAsm_ModProt"/>
</dbReference>
<dbReference type="PANTHER" id="PTHR34858">
    <property type="entry name" value="CYSO-CYSTEINE PEPTIDASE"/>
    <property type="match status" value="1"/>
</dbReference>
<dbReference type="PANTHER" id="PTHR34858:SF1">
    <property type="entry name" value="CYSO-CYSTEINE PEPTIDASE"/>
    <property type="match status" value="1"/>
</dbReference>
<dbReference type="Pfam" id="PF14464">
    <property type="entry name" value="Prok-JAB"/>
    <property type="match status" value="1"/>
</dbReference>
<dbReference type="SMART" id="SM00232">
    <property type="entry name" value="JAB_MPN"/>
    <property type="match status" value="1"/>
</dbReference>
<dbReference type="SUPFAM" id="SSF102712">
    <property type="entry name" value="JAB1/MPN domain"/>
    <property type="match status" value="1"/>
</dbReference>
<dbReference type="PROSITE" id="PS50249">
    <property type="entry name" value="MPN"/>
    <property type="match status" value="1"/>
</dbReference>
<organism>
    <name type="scientific">Mycobacterium tuberculosis (strain CDC 1551 / Oshkosh)</name>
    <dbReference type="NCBI Taxonomy" id="83331"/>
    <lineage>
        <taxon>Bacteria</taxon>
        <taxon>Bacillati</taxon>
        <taxon>Actinomycetota</taxon>
        <taxon>Actinomycetes</taxon>
        <taxon>Mycobacteriales</taxon>
        <taxon>Mycobacteriaceae</taxon>
        <taxon>Mycobacterium</taxon>
        <taxon>Mycobacterium tuberculosis complex</taxon>
    </lineage>
</organism>
<evidence type="ECO:0000250" key="1">
    <source>
        <dbReference type="UniProtKB" id="P9WHS1"/>
    </source>
</evidence>
<evidence type="ECO:0000255" key="2">
    <source>
        <dbReference type="PROSITE-ProRule" id="PRU01182"/>
    </source>
</evidence>
<evidence type="ECO:0000305" key="3"/>
<reference key="1">
    <citation type="journal article" date="2002" name="J. Bacteriol.">
        <title>Whole-genome comparison of Mycobacterium tuberculosis clinical and laboratory strains.</title>
        <authorList>
            <person name="Fleischmann R.D."/>
            <person name="Alland D."/>
            <person name="Eisen J.A."/>
            <person name="Carpenter L."/>
            <person name="White O."/>
            <person name="Peterson J.D."/>
            <person name="DeBoy R.T."/>
            <person name="Dodson R.J."/>
            <person name="Gwinn M.L."/>
            <person name="Haft D.H."/>
            <person name="Hickey E.K."/>
            <person name="Kolonay J.F."/>
            <person name="Nelson W.C."/>
            <person name="Umayam L.A."/>
            <person name="Ermolaeva M.D."/>
            <person name="Salzberg S.L."/>
            <person name="Delcher A."/>
            <person name="Utterback T.R."/>
            <person name="Weidman J.F."/>
            <person name="Khouri H.M."/>
            <person name="Gill J."/>
            <person name="Mikula A."/>
            <person name="Bishai W."/>
            <person name="Jacobs W.R. Jr."/>
            <person name="Venter J.C."/>
            <person name="Fraser C.M."/>
        </authorList>
    </citation>
    <scope>NUCLEOTIDE SEQUENCE [LARGE SCALE GENOMIC DNA]</scope>
    <source>
        <strain>CDC 1551 / Oshkosh</strain>
    </source>
</reference>
<accession>P9WHS0</accession>
<accession>L0T6J9</accession>
<accession>P64813</accession>
<accession>Q10645</accession>
<gene>
    <name type="primary">mec</name>
    <name type="synonym">mec+</name>
    <name type="ordered locus">MT1376</name>
</gene>
<sequence length="146" mass="16530">MLLRKGTVYVLVIRADLVNAMVAHARRDHPDEACGVLAGPEGSDRPERHIPMTNAERSPTFYRLDSGEQLKVWRAMEDADEVPVVIYHSHTATEAYPSRTDVKLATEPDAHYVLVSTRDPHRHELRSYRIVDGAVTEEPVNVVEQY</sequence>
<proteinExistence type="inferred from homology"/>